<organism>
    <name type="scientific">Human cytomegalovirus (strain AD169)</name>
    <name type="common">HHV-5</name>
    <name type="synonym">Human herpesvirus 5</name>
    <dbReference type="NCBI Taxonomy" id="10360"/>
    <lineage>
        <taxon>Viruses</taxon>
        <taxon>Duplodnaviria</taxon>
        <taxon>Heunggongvirae</taxon>
        <taxon>Peploviricota</taxon>
        <taxon>Herviviricetes</taxon>
        <taxon>Herpesvirales</taxon>
        <taxon>Orthoherpesviridae</taxon>
        <taxon>Betaherpesvirinae</taxon>
        <taxon>Cytomegalovirus</taxon>
        <taxon>Cytomegalovirus humanbeta5</taxon>
        <taxon>Human cytomegalovirus</taxon>
    </lineage>
</organism>
<reference key="1">
    <citation type="journal article" date="1990" name="Curr. Top. Microbiol. Immunol.">
        <title>Analysis of the protein-coding content of the sequence of human cytomegalovirus strain AD169.</title>
        <authorList>
            <person name="Chee M.S."/>
            <person name="Bankier A.T."/>
            <person name="Beck S."/>
            <person name="Bohni R."/>
            <person name="Brown C.M."/>
            <person name="Cerny R."/>
            <person name="Horsnell T."/>
            <person name="Hutchison C.A. III"/>
            <person name="Kouzarides T."/>
            <person name="Martignetti J.A."/>
            <person name="Preddie E."/>
            <person name="Satchwell S.C."/>
            <person name="Tomlinson P."/>
            <person name="Weston K.M."/>
            <person name="Barrell B.G."/>
        </authorList>
    </citation>
    <scope>NUCLEOTIDE SEQUENCE [LARGE SCALE GENOMIC DNA]</scope>
</reference>
<reference key="2">
    <citation type="journal article" date="1997" name="J. Virol.">
        <title>The published DNA sequence of human cytomegalovirus strain AD169 lacks 929 base pairs of DNA affecting genes UL42 and UL43.</title>
        <authorList>
            <person name="Dargan D.J."/>
            <person name="Jamieson F.E."/>
            <person name="Maclean J."/>
            <person name="Dolan A."/>
            <person name="Addison C."/>
            <person name="McGeoch D.J."/>
        </authorList>
    </citation>
    <scope>NUCLEOTIDE SEQUENCE [GENOMIC DNA] OF 1-115</scope>
    <scope>SEQUENCE REVISION TO 1</scope>
</reference>
<organismHost>
    <name type="scientific">Homo sapiens</name>
    <name type="common">Human</name>
    <dbReference type="NCBI Taxonomy" id="9606"/>
</organismHost>
<protein>
    <recommendedName>
        <fullName>Uncharacterized protein UL41</fullName>
    </recommendedName>
</protein>
<dbReference type="EMBL" id="X17403">
    <property type="protein sequence ID" value="CAA35400.1"/>
    <property type="status" value="ALT_SEQ"/>
    <property type="molecule type" value="Genomic_DNA"/>
</dbReference>
<dbReference type="EMBL" id="Y13735">
    <property type="protein sequence ID" value="CAA74072.1"/>
    <property type="molecule type" value="Genomic_DNA"/>
</dbReference>
<dbReference type="PIR" id="S09804">
    <property type="entry name" value="S09804"/>
</dbReference>
<dbReference type="Proteomes" id="UP000008991">
    <property type="component" value="Segment"/>
</dbReference>
<accession>P16814</accession>
<accession>O39919</accession>
<gene>
    <name type="primary">UL41</name>
</gene>
<name>UL41_HCMVA</name>
<proteinExistence type="predicted"/>
<feature type="chain" id="PRO_0000115323" description="Uncharacterized protein UL41">
    <location>
        <begin position="1"/>
        <end position="141"/>
    </location>
</feature>
<sequence>MYHHCCYGIITTLRPGLWCVLFFVHARHDTLLPHRQQHRRLRRHERLHRHDRRGLFRFRGLYSHLLLHVESFLRAAKDLPPPGYRVGRRGDHGLGKAPDGVGYRLLKEAIKIWEFPCLRLHDGRLFLRLGLCLVVIRARTF</sequence>